<accession>Q2QX45</accession>
<keyword id="KW-0067">ATP-binding</keyword>
<keyword id="KW-0106">Calcium</keyword>
<keyword id="KW-0418">Kinase</keyword>
<keyword id="KW-0479">Metal-binding</keyword>
<keyword id="KW-0547">Nucleotide-binding</keyword>
<keyword id="KW-1185">Reference proteome</keyword>
<keyword id="KW-0677">Repeat</keyword>
<keyword id="KW-0723">Serine/threonine-protein kinase</keyword>
<keyword id="KW-0808">Transferase</keyword>
<gene>
    <name evidence="5" type="primary">CPK28</name>
    <name evidence="8" type="ordered locus">Os12g0169800</name>
    <name evidence="7" type="ordered locus">LOC_Os12g07230</name>
</gene>
<protein>
    <recommendedName>
        <fullName evidence="6">Calcium-dependent protein kinase 28</fullName>
        <shortName evidence="6">OsCDPK28</shortName>
        <shortName evidence="5">OsCPK28</shortName>
        <ecNumber evidence="6">2.7.11.1</ecNumber>
    </recommendedName>
</protein>
<evidence type="ECO:0000250" key="1">
    <source>
        <dbReference type="UniProtKB" id="Q06850"/>
    </source>
</evidence>
<evidence type="ECO:0000255" key="2">
    <source>
        <dbReference type="PROSITE-ProRule" id="PRU00159"/>
    </source>
</evidence>
<evidence type="ECO:0000255" key="3">
    <source>
        <dbReference type="PROSITE-ProRule" id="PRU00448"/>
    </source>
</evidence>
<evidence type="ECO:0000256" key="4">
    <source>
        <dbReference type="SAM" id="MobiDB-lite"/>
    </source>
</evidence>
<evidence type="ECO:0000303" key="5">
    <source>
    </source>
</evidence>
<evidence type="ECO:0000305" key="6"/>
<evidence type="ECO:0000312" key="7">
    <source>
        <dbReference type="EMBL" id="ABA95933.1"/>
    </source>
</evidence>
<evidence type="ECO:0000312" key="8">
    <source>
        <dbReference type="EMBL" id="BAF29285.1"/>
    </source>
</evidence>
<organism>
    <name type="scientific">Oryza sativa subsp. japonica</name>
    <name type="common">Rice</name>
    <dbReference type="NCBI Taxonomy" id="39947"/>
    <lineage>
        <taxon>Eukaryota</taxon>
        <taxon>Viridiplantae</taxon>
        <taxon>Streptophyta</taxon>
        <taxon>Embryophyta</taxon>
        <taxon>Tracheophyta</taxon>
        <taxon>Spermatophyta</taxon>
        <taxon>Magnoliopsida</taxon>
        <taxon>Liliopsida</taxon>
        <taxon>Poales</taxon>
        <taxon>Poaceae</taxon>
        <taxon>BOP clade</taxon>
        <taxon>Oryzoideae</taxon>
        <taxon>Oryzeae</taxon>
        <taxon>Oryzinae</taxon>
        <taxon>Oryza</taxon>
        <taxon>Oryza sativa</taxon>
    </lineage>
</organism>
<feature type="chain" id="PRO_0000437570" description="Calcium-dependent protein kinase 28">
    <location>
        <begin position="1"/>
        <end position="526"/>
    </location>
</feature>
<feature type="domain" description="Protein kinase" evidence="2">
    <location>
        <begin position="49"/>
        <end position="307"/>
    </location>
</feature>
<feature type="domain" description="EF-hand 1" evidence="3">
    <location>
        <begin position="350"/>
        <end position="385"/>
    </location>
</feature>
<feature type="domain" description="EF-hand 2" evidence="3">
    <location>
        <begin position="386"/>
        <end position="421"/>
    </location>
</feature>
<feature type="domain" description="EF-hand 3" evidence="3">
    <location>
        <begin position="422"/>
        <end position="457"/>
    </location>
</feature>
<feature type="domain" description="EF-hand 4" evidence="3">
    <location>
        <begin position="460"/>
        <end position="491"/>
    </location>
</feature>
<feature type="region of interest" description="Disordered" evidence="4">
    <location>
        <begin position="1"/>
        <end position="37"/>
    </location>
</feature>
<feature type="region of interest" description="Autoinhibitory domain" evidence="1">
    <location>
        <begin position="313"/>
        <end position="343"/>
    </location>
</feature>
<feature type="active site" description="Proton acceptor" evidence="2">
    <location>
        <position position="173"/>
    </location>
</feature>
<feature type="binding site" evidence="2">
    <location>
        <begin position="55"/>
        <end position="63"/>
    </location>
    <ligand>
        <name>ATP</name>
        <dbReference type="ChEBI" id="CHEBI:30616"/>
    </ligand>
</feature>
<feature type="binding site" evidence="2">
    <location>
        <position position="78"/>
    </location>
    <ligand>
        <name>ATP</name>
        <dbReference type="ChEBI" id="CHEBI:30616"/>
    </ligand>
</feature>
<feature type="binding site" evidence="3">
    <location>
        <position position="363"/>
    </location>
    <ligand>
        <name>Ca(2+)</name>
        <dbReference type="ChEBI" id="CHEBI:29108"/>
        <label>1</label>
    </ligand>
</feature>
<feature type="binding site" evidence="3">
    <location>
        <position position="365"/>
    </location>
    <ligand>
        <name>Ca(2+)</name>
        <dbReference type="ChEBI" id="CHEBI:29108"/>
        <label>1</label>
    </ligand>
</feature>
<feature type="binding site" evidence="3">
    <location>
        <position position="367"/>
    </location>
    <ligand>
        <name>Ca(2+)</name>
        <dbReference type="ChEBI" id="CHEBI:29108"/>
        <label>1</label>
    </ligand>
</feature>
<feature type="binding site" evidence="3">
    <location>
        <position position="369"/>
    </location>
    <ligand>
        <name>Ca(2+)</name>
        <dbReference type="ChEBI" id="CHEBI:29108"/>
        <label>1</label>
    </ligand>
</feature>
<feature type="binding site" evidence="3">
    <location>
        <position position="374"/>
    </location>
    <ligand>
        <name>Ca(2+)</name>
        <dbReference type="ChEBI" id="CHEBI:29108"/>
        <label>1</label>
    </ligand>
</feature>
<feature type="binding site" evidence="3">
    <location>
        <position position="399"/>
    </location>
    <ligand>
        <name>Ca(2+)</name>
        <dbReference type="ChEBI" id="CHEBI:29108"/>
        <label>2</label>
    </ligand>
</feature>
<feature type="binding site" evidence="3">
    <location>
        <position position="401"/>
    </location>
    <ligand>
        <name>Ca(2+)</name>
        <dbReference type="ChEBI" id="CHEBI:29108"/>
        <label>2</label>
    </ligand>
</feature>
<feature type="binding site" evidence="3">
    <location>
        <position position="403"/>
    </location>
    <ligand>
        <name>Ca(2+)</name>
        <dbReference type="ChEBI" id="CHEBI:29108"/>
        <label>2</label>
    </ligand>
</feature>
<feature type="binding site" evidence="3">
    <location>
        <position position="405"/>
    </location>
    <ligand>
        <name>Ca(2+)</name>
        <dbReference type="ChEBI" id="CHEBI:29108"/>
        <label>2</label>
    </ligand>
</feature>
<feature type="binding site" evidence="3">
    <location>
        <position position="410"/>
    </location>
    <ligand>
        <name>Ca(2+)</name>
        <dbReference type="ChEBI" id="CHEBI:29108"/>
        <label>2</label>
    </ligand>
</feature>
<feature type="binding site" evidence="3">
    <location>
        <position position="435"/>
    </location>
    <ligand>
        <name>Ca(2+)</name>
        <dbReference type="ChEBI" id="CHEBI:29108"/>
        <label>3</label>
    </ligand>
</feature>
<feature type="binding site" evidence="3">
    <location>
        <position position="437"/>
    </location>
    <ligand>
        <name>Ca(2+)</name>
        <dbReference type="ChEBI" id="CHEBI:29108"/>
        <label>3</label>
    </ligand>
</feature>
<feature type="binding site" evidence="3">
    <location>
        <position position="439"/>
    </location>
    <ligand>
        <name>Ca(2+)</name>
        <dbReference type="ChEBI" id="CHEBI:29108"/>
        <label>3</label>
    </ligand>
</feature>
<feature type="binding site" evidence="3">
    <location>
        <position position="446"/>
    </location>
    <ligand>
        <name>Ca(2+)</name>
        <dbReference type="ChEBI" id="CHEBI:29108"/>
        <label>3</label>
    </ligand>
</feature>
<feature type="binding site" evidence="3">
    <location>
        <position position="469"/>
    </location>
    <ligand>
        <name>Ca(2+)</name>
        <dbReference type="ChEBI" id="CHEBI:29108"/>
        <label>4</label>
    </ligand>
</feature>
<feature type="binding site" evidence="3">
    <location>
        <position position="471"/>
    </location>
    <ligand>
        <name>Ca(2+)</name>
        <dbReference type="ChEBI" id="CHEBI:29108"/>
        <label>4</label>
    </ligand>
</feature>
<feature type="binding site" evidence="3">
    <location>
        <position position="473"/>
    </location>
    <ligand>
        <name>Ca(2+)</name>
        <dbReference type="ChEBI" id="CHEBI:29108"/>
        <label>4</label>
    </ligand>
</feature>
<feature type="binding site" evidence="3">
    <location>
        <position position="475"/>
    </location>
    <ligand>
        <name>Ca(2+)</name>
        <dbReference type="ChEBI" id="CHEBI:29108"/>
        <label>4</label>
    </ligand>
</feature>
<feature type="binding site" evidence="3">
    <location>
        <position position="480"/>
    </location>
    <ligand>
        <name>Ca(2+)</name>
        <dbReference type="ChEBI" id="CHEBI:29108"/>
        <label>4</label>
    </ligand>
</feature>
<proteinExistence type="inferred from homology"/>
<reference key="1">
    <citation type="journal article" date="2005" name="BMC Biol.">
        <title>The sequence of rice chromosomes 11 and 12, rich in disease resistance genes and recent gene duplications.</title>
        <authorList>
            <consortium name="The rice chromosomes 11 and 12 sequencing consortia"/>
        </authorList>
    </citation>
    <scope>NUCLEOTIDE SEQUENCE [LARGE SCALE GENOMIC DNA]</scope>
    <source>
        <strain>cv. Nipponbare</strain>
    </source>
</reference>
<reference key="2">
    <citation type="journal article" date="2005" name="Nature">
        <title>The map-based sequence of the rice genome.</title>
        <authorList>
            <consortium name="International rice genome sequencing project (IRGSP)"/>
        </authorList>
    </citation>
    <scope>NUCLEOTIDE SEQUENCE [LARGE SCALE GENOMIC DNA]</scope>
    <source>
        <strain>cv. Nipponbare</strain>
    </source>
</reference>
<reference key="3">
    <citation type="journal article" date="2008" name="Nucleic Acids Res.">
        <title>The rice annotation project database (RAP-DB): 2008 update.</title>
        <authorList>
            <consortium name="The rice annotation project (RAP)"/>
        </authorList>
    </citation>
    <scope>GENOME REANNOTATION</scope>
    <source>
        <strain>cv. Nipponbare</strain>
    </source>
</reference>
<reference key="4">
    <citation type="journal article" date="2013" name="Rice">
        <title>Improvement of the Oryza sativa Nipponbare reference genome using next generation sequence and optical map data.</title>
        <authorList>
            <person name="Kawahara Y."/>
            <person name="de la Bastide M."/>
            <person name="Hamilton J.P."/>
            <person name="Kanamori H."/>
            <person name="McCombie W.R."/>
            <person name="Ouyang S."/>
            <person name="Schwartz D.C."/>
            <person name="Tanaka T."/>
            <person name="Wu J."/>
            <person name="Zhou S."/>
            <person name="Childs K.L."/>
            <person name="Davidson R.M."/>
            <person name="Lin H."/>
            <person name="Quesada-Ocampo L."/>
            <person name="Vaillancourt B."/>
            <person name="Sakai H."/>
            <person name="Lee S.S."/>
            <person name="Kim J."/>
            <person name="Numa H."/>
            <person name="Itoh T."/>
            <person name="Buell C.R."/>
            <person name="Matsumoto T."/>
        </authorList>
    </citation>
    <scope>GENOME REANNOTATION</scope>
    <source>
        <strain>cv. Nipponbare</strain>
    </source>
</reference>
<reference key="5">
    <citation type="journal article" date="2005" name="Plant Cell Physiol.">
        <title>Genome-wide identification of the rice calcium-dependent protein kinase and its closely related kinase gene families: comprehensive analysis of the CDPKs gene family in rice.</title>
        <authorList>
            <person name="Asano T."/>
            <person name="Tanaka N."/>
            <person name="Yang G."/>
            <person name="Hayashi N."/>
            <person name="Komatsu S."/>
        </authorList>
    </citation>
    <scope>GENE FAMILY</scope>
    <scope>NOMENCLATURE</scope>
</reference>
<dbReference type="EC" id="2.7.11.1" evidence="6"/>
<dbReference type="EMBL" id="DP000011">
    <property type="protein sequence ID" value="ABA95933.1"/>
    <property type="molecule type" value="Genomic_DNA"/>
</dbReference>
<dbReference type="EMBL" id="AP008218">
    <property type="protein sequence ID" value="BAF29285.1"/>
    <property type="molecule type" value="Genomic_DNA"/>
</dbReference>
<dbReference type="EMBL" id="AP014968">
    <property type="protein sequence ID" value="BAT16063.1"/>
    <property type="molecule type" value="Genomic_DNA"/>
</dbReference>
<dbReference type="RefSeq" id="XP_015619927.1">
    <property type="nucleotide sequence ID" value="XM_015764441.1"/>
</dbReference>
<dbReference type="SMR" id="Q2QX45"/>
<dbReference type="FunCoup" id="Q2QX45">
    <property type="interactions" value="2199"/>
</dbReference>
<dbReference type="STRING" id="39947.Q2QX45"/>
<dbReference type="PaxDb" id="39947-Q2QX45"/>
<dbReference type="EnsemblPlants" id="Os12t0169800-00">
    <property type="protein sequence ID" value="Os12t0169800-00"/>
    <property type="gene ID" value="Os12g0169800"/>
</dbReference>
<dbReference type="Gramene" id="Os12t0169800-00">
    <property type="protein sequence ID" value="Os12t0169800-00"/>
    <property type="gene ID" value="Os12g0169800"/>
</dbReference>
<dbReference type="KEGG" id="dosa:Os12g0169800"/>
<dbReference type="eggNOG" id="KOG0032">
    <property type="taxonomic scope" value="Eukaryota"/>
</dbReference>
<dbReference type="HOGENOM" id="CLU_000288_37_4_1"/>
<dbReference type="InParanoid" id="Q2QX45"/>
<dbReference type="OMA" id="ICDHKTP"/>
<dbReference type="OrthoDB" id="40902at2759"/>
<dbReference type="Proteomes" id="UP000000763">
    <property type="component" value="Chromosome 12"/>
</dbReference>
<dbReference type="Proteomes" id="UP000059680">
    <property type="component" value="Chromosome 12"/>
</dbReference>
<dbReference type="GO" id="GO:0005737">
    <property type="term" value="C:cytoplasm"/>
    <property type="evidence" value="ECO:0000318"/>
    <property type="project" value="GO_Central"/>
</dbReference>
<dbReference type="GO" id="GO:0005634">
    <property type="term" value="C:nucleus"/>
    <property type="evidence" value="ECO:0000318"/>
    <property type="project" value="GO_Central"/>
</dbReference>
<dbReference type="GO" id="GO:0005524">
    <property type="term" value="F:ATP binding"/>
    <property type="evidence" value="ECO:0007669"/>
    <property type="project" value="UniProtKB-KW"/>
</dbReference>
<dbReference type="GO" id="GO:0005509">
    <property type="term" value="F:calcium ion binding"/>
    <property type="evidence" value="ECO:0007669"/>
    <property type="project" value="InterPro"/>
</dbReference>
<dbReference type="GO" id="GO:0009931">
    <property type="term" value="F:calcium-dependent protein serine/threonine kinase activity"/>
    <property type="evidence" value="ECO:0000318"/>
    <property type="project" value="GO_Central"/>
</dbReference>
<dbReference type="GO" id="GO:0004683">
    <property type="term" value="F:calcium/calmodulin-dependent protein kinase activity"/>
    <property type="evidence" value="ECO:0000318"/>
    <property type="project" value="GO_Central"/>
</dbReference>
<dbReference type="GO" id="GO:0005516">
    <property type="term" value="F:calmodulin binding"/>
    <property type="evidence" value="ECO:0000318"/>
    <property type="project" value="GO_Central"/>
</dbReference>
<dbReference type="GO" id="GO:0106310">
    <property type="term" value="F:protein serine kinase activity"/>
    <property type="evidence" value="ECO:0007669"/>
    <property type="project" value="RHEA"/>
</dbReference>
<dbReference type="GO" id="GO:0035556">
    <property type="term" value="P:intracellular signal transduction"/>
    <property type="evidence" value="ECO:0000318"/>
    <property type="project" value="GO_Central"/>
</dbReference>
<dbReference type="CDD" id="cd00051">
    <property type="entry name" value="EFh"/>
    <property type="match status" value="2"/>
</dbReference>
<dbReference type="CDD" id="cd05117">
    <property type="entry name" value="STKc_CAMK"/>
    <property type="match status" value="1"/>
</dbReference>
<dbReference type="FunFam" id="1.10.238.10:FF:000015">
    <property type="entry name" value="Calcium-dependent protein kinase 1"/>
    <property type="match status" value="1"/>
</dbReference>
<dbReference type="FunFam" id="3.30.200.20:FF:000004">
    <property type="entry name" value="Calcium-dependent protein kinase 1"/>
    <property type="match status" value="1"/>
</dbReference>
<dbReference type="FunFam" id="1.10.510.10:FF:001864">
    <property type="entry name" value="Calcium-dependent protein kinase SK5"/>
    <property type="match status" value="1"/>
</dbReference>
<dbReference type="FunFam" id="1.10.510.10:FF:001294">
    <property type="entry name" value="CDPK-related kinase 3"/>
    <property type="match status" value="1"/>
</dbReference>
<dbReference type="Gene3D" id="1.10.238.10">
    <property type="entry name" value="EF-hand"/>
    <property type="match status" value="1"/>
</dbReference>
<dbReference type="Gene3D" id="3.30.200.20">
    <property type="entry name" value="Phosphorylase Kinase, domain 1"/>
    <property type="match status" value="1"/>
</dbReference>
<dbReference type="Gene3D" id="1.10.510.10">
    <property type="entry name" value="Transferase(Phosphotransferase) domain 1"/>
    <property type="match status" value="1"/>
</dbReference>
<dbReference type="InterPro" id="IPR050205">
    <property type="entry name" value="CDPK_Ser/Thr_kinases"/>
</dbReference>
<dbReference type="InterPro" id="IPR011992">
    <property type="entry name" value="EF-hand-dom_pair"/>
</dbReference>
<dbReference type="InterPro" id="IPR018247">
    <property type="entry name" value="EF_Hand_1_Ca_BS"/>
</dbReference>
<dbReference type="InterPro" id="IPR002048">
    <property type="entry name" value="EF_hand_dom"/>
</dbReference>
<dbReference type="InterPro" id="IPR011009">
    <property type="entry name" value="Kinase-like_dom_sf"/>
</dbReference>
<dbReference type="InterPro" id="IPR000719">
    <property type="entry name" value="Prot_kinase_dom"/>
</dbReference>
<dbReference type="InterPro" id="IPR017441">
    <property type="entry name" value="Protein_kinase_ATP_BS"/>
</dbReference>
<dbReference type="InterPro" id="IPR008271">
    <property type="entry name" value="Ser/Thr_kinase_AS"/>
</dbReference>
<dbReference type="PANTHER" id="PTHR24349">
    <property type="entry name" value="SERINE/THREONINE-PROTEIN KINASE"/>
    <property type="match status" value="1"/>
</dbReference>
<dbReference type="Pfam" id="PF13499">
    <property type="entry name" value="EF-hand_7"/>
    <property type="match status" value="2"/>
</dbReference>
<dbReference type="Pfam" id="PF00069">
    <property type="entry name" value="Pkinase"/>
    <property type="match status" value="1"/>
</dbReference>
<dbReference type="SMART" id="SM00054">
    <property type="entry name" value="EFh"/>
    <property type="match status" value="4"/>
</dbReference>
<dbReference type="SMART" id="SM00220">
    <property type="entry name" value="S_TKc"/>
    <property type="match status" value="1"/>
</dbReference>
<dbReference type="SUPFAM" id="SSF47473">
    <property type="entry name" value="EF-hand"/>
    <property type="match status" value="1"/>
</dbReference>
<dbReference type="SUPFAM" id="SSF56112">
    <property type="entry name" value="Protein kinase-like (PK-like)"/>
    <property type="match status" value="1"/>
</dbReference>
<dbReference type="PROSITE" id="PS00018">
    <property type="entry name" value="EF_HAND_1"/>
    <property type="match status" value="4"/>
</dbReference>
<dbReference type="PROSITE" id="PS50222">
    <property type="entry name" value="EF_HAND_2"/>
    <property type="match status" value="4"/>
</dbReference>
<dbReference type="PROSITE" id="PS00107">
    <property type="entry name" value="PROTEIN_KINASE_ATP"/>
    <property type="match status" value="1"/>
</dbReference>
<dbReference type="PROSITE" id="PS50011">
    <property type="entry name" value="PROTEIN_KINASE_DOM"/>
    <property type="match status" value="1"/>
</dbReference>
<dbReference type="PROSITE" id="PS00108">
    <property type="entry name" value="PROTEIN_KINASE_ST"/>
    <property type="match status" value="1"/>
</dbReference>
<sequence>MQPDPQPHGRGREKAAGAGPRLPPPVTAPSVGRPASVLPHKTANVRDHYRIGKKLGQGQFGTTYLCVGKPDGGEYACKSIPKRKLLCREDYEDVWREIQIMHHLSEHPNVVRIRGAYEDALFVHIVMELCAGGELFDRIVAKGHYTERAAALLIRTIVGVVEGCHSLGVMHRDLKPENFLFASTAEDAPLKATDFGLSVFYKPGDKFSDVVGSPYYVAPEVLQKIYGPEADVWSAGVILYILLCGVPPFWAETESGIFRQILRGKLDLESDPWPSISDSAKDLVRNMLIRDPTKRFTAHEVLCHPWIVDDAVAPDKPIDSAVLSRLKHFSAMNKLKKMALRVIAESLSEEEIGGLKELFKMIDTDNSGTITYDELKNGLKRVGSDLMEPEIQALMDAADIDNSGTIDYGEFLAATLHMNKLEREENLVSAFTFFDKDGSGFITIDELSQACEQFGLSDVHLEDMIKDVDQNNDGQIDYSEFAAMMRKGNAGGANAGGVTSTGGTGRRTMRNSLRVNLGDILKPNEN</sequence>
<name>CDPKS_ORYSJ</name>
<comment type="function">
    <text evidence="1">May play a role in signal transduction pathways that involve calcium as a second messenger.</text>
</comment>
<comment type="catalytic activity">
    <reaction evidence="6">
        <text>L-seryl-[protein] + ATP = O-phospho-L-seryl-[protein] + ADP + H(+)</text>
        <dbReference type="Rhea" id="RHEA:17989"/>
        <dbReference type="Rhea" id="RHEA-COMP:9863"/>
        <dbReference type="Rhea" id="RHEA-COMP:11604"/>
        <dbReference type="ChEBI" id="CHEBI:15378"/>
        <dbReference type="ChEBI" id="CHEBI:29999"/>
        <dbReference type="ChEBI" id="CHEBI:30616"/>
        <dbReference type="ChEBI" id="CHEBI:83421"/>
        <dbReference type="ChEBI" id="CHEBI:456216"/>
        <dbReference type="EC" id="2.7.11.1"/>
    </reaction>
</comment>
<comment type="catalytic activity">
    <reaction evidence="6">
        <text>L-threonyl-[protein] + ATP = O-phospho-L-threonyl-[protein] + ADP + H(+)</text>
        <dbReference type="Rhea" id="RHEA:46608"/>
        <dbReference type="Rhea" id="RHEA-COMP:11060"/>
        <dbReference type="Rhea" id="RHEA-COMP:11605"/>
        <dbReference type="ChEBI" id="CHEBI:15378"/>
        <dbReference type="ChEBI" id="CHEBI:30013"/>
        <dbReference type="ChEBI" id="CHEBI:30616"/>
        <dbReference type="ChEBI" id="CHEBI:61977"/>
        <dbReference type="ChEBI" id="CHEBI:456216"/>
        <dbReference type="EC" id="2.7.11.1"/>
    </reaction>
</comment>
<comment type="activity regulation">
    <text evidence="1">Activated by calcium. Autophosphorylation may play an important role in the regulation of the kinase activity.</text>
</comment>
<comment type="domain">
    <text evidence="1">There are 3 contiguous domains conserved in the CDPK subfamily: a kinase domain, an autoinhibitory (junction) domain and a calmodulin-like domain. The autoinhibitory domain (313-343) inactivates kinase activity under calcium-free conditions.</text>
</comment>
<comment type="similarity">
    <text evidence="6">Belongs to the protein kinase superfamily. Ser/Thr protein kinase family. CDPK subfamily.</text>
</comment>